<name>MNHF1_STAAU</name>
<comment type="function">
    <text>Mnh complex is a Na(+)Li(+)/H(+) antiporter involved in Na(+) and/or Li(+) excretion. Na(+)/H(+) antiport consumes a transmembrane electrical potential, and is thus inferred to be electrogenic. Does not transport K(+), Ca(2+) or Mg(2+).</text>
</comment>
<comment type="activity regulation">
    <text>Na(+) extrusion is completely inhibited by the H(+) conductor carbonyl cyanide m-chlorophenylhydrazone (CCCP).</text>
</comment>
<comment type="subunit">
    <text>May form a heterooligomeric complex that consists of seven subunits: mnhA1, mnhB1, mnhC1, mnhD1, mnhE1, mnhF1 and mnhG1.</text>
</comment>
<comment type="subcellular location">
    <subcellularLocation>
        <location evidence="2">Cell membrane</location>
        <topology evidence="2">Multi-pass membrane protein</topology>
    </subcellularLocation>
</comment>
<comment type="similarity">
    <text evidence="2">Belongs to the CPA3 antiporters (TC 2.A.63) subunit F family.</text>
</comment>
<reference key="1">
    <citation type="journal article" date="1998" name="J. Bacteriol.">
        <title>A putative multisubunit Na+/H+ antiporter from Staphylococcus aureus.</title>
        <authorList>
            <person name="Hiramatsu T."/>
            <person name="Kodama K."/>
            <person name="Kuroda T."/>
            <person name="Mizushima T."/>
            <person name="Tsuchiya T."/>
        </authorList>
    </citation>
    <scope>NUCLEOTIDE SEQUENCE [GENOMIC DNA]</scope>
    <scope>CHARACTERIZATION OF ANTIPORTER ACTIVITY</scope>
    <source>
        <strain>ATCC 21027 / 209-P</strain>
    </source>
</reference>
<reference key="2">
    <citation type="journal article" date="2007" name="J. Bacteriol.">
        <title>Catalytic properties of Staphylococcus aureus and Bacillus members of the secondary cation/proton antiporter-3 (Mrp) family are revealed by an optimized assay in an Escherichia coli host.</title>
        <authorList>
            <person name="Swartz T.H."/>
            <person name="Ito M."/>
            <person name="Ohira T."/>
            <person name="Natsui S."/>
            <person name="Hicks D.B."/>
            <person name="Krulwich T.A."/>
        </authorList>
    </citation>
    <scope>NUCLEOTIDE SEQUENCE [GENOMIC DNA]</scope>
    <scope>CHARACTERIZATION</scope>
    <scope>PROBABLE ELECTROGENIC ANTIPORTER ACTIVITY</scope>
    <source>
        <strain>RF4220</strain>
    </source>
</reference>
<evidence type="ECO:0000255" key="1"/>
<evidence type="ECO:0000305" key="2"/>
<sequence length="97" mass="10616">MNHNVIIVIALIIVVISMLAMLIRVVLGPSLADRVVALDAIGLQLMAVIALFSILLNIKYMIVVIMMIGILAFLGTAVFSKFMDKGKVIEHDQNHTD</sequence>
<protein>
    <recommendedName>
        <fullName>Na(+)/H(+) antiporter subunit F1</fullName>
    </recommendedName>
    <alternativeName>
        <fullName>Mnh complex subunit F1</fullName>
    </alternativeName>
    <alternativeName>
        <fullName>Mrp complex subunit F1</fullName>
    </alternativeName>
</protein>
<organism>
    <name type="scientific">Staphylococcus aureus</name>
    <dbReference type="NCBI Taxonomy" id="1280"/>
    <lineage>
        <taxon>Bacteria</taxon>
        <taxon>Bacillati</taxon>
        <taxon>Bacillota</taxon>
        <taxon>Bacilli</taxon>
        <taxon>Bacillales</taxon>
        <taxon>Staphylococcaceae</taxon>
        <taxon>Staphylococcus</taxon>
    </lineage>
</organism>
<accession>P60694</accession>
<accession>Q0Q2K2</accession>
<accession>Q9ZNG1</accession>
<feature type="chain" id="PRO_0000087740" description="Na(+)/H(+) antiporter subunit F1">
    <location>
        <begin position="1"/>
        <end position="97"/>
    </location>
</feature>
<feature type="transmembrane region" description="Helical" evidence="1">
    <location>
        <begin position="5"/>
        <end position="27"/>
    </location>
</feature>
<feature type="transmembrane region" description="Helical" evidence="1">
    <location>
        <begin position="34"/>
        <end position="56"/>
    </location>
</feature>
<feature type="transmembrane region" description="Helical" evidence="1">
    <location>
        <begin position="60"/>
        <end position="82"/>
    </location>
</feature>
<gene>
    <name type="primary">mnhF1</name>
    <name type="synonym">mrpF1</name>
</gene>
<dbReference type="EMBL" id="AB015981">
    <property type="protein sequence ID" value="BAA35100.1"/>
    <property type="molecule type" value="Genomic_DNA"/>
</dbReference>
<dbReference type="EMBL" id="DQ659238">
    <property type="protein sequence ID" value="ABG67115.1"/>
    <property type="molecule type" value="Genomic_DNA"/>
</dbReference>
<dbReference type="PIR" id="D89861">
    <property type="entry name" value="D89861"/>
</dbReference>
<dbReference type="RefSeq" id="WP_001016306.1">
    <property type="nucleotide sequence ID" value="NZ_WYDB01000003.1"/>
</dbReference>
<dbReference type="SMR" id="P60694"/>
<dbReference type="TCDB" id="2.A.63.1.3">
    <property type="family name" value="the monovalent cation (k(+) or na(+)):proton antiporter-3 (cpa3) family"/>
</dbReference>
<dbReference type="OMA" id="MRGEIIE"/>
<dbReference type="GO" id="GO:0005886">
    <property type="term" value="C:plasma membrane"/>
    <property type="evidence" value="ECO:0007669"/>
    <property type="project" value="UniProtKB-SubCell"/>
</dbReference>
<dbReference type="GO" id="GO:0015385">
    <property type="term" value="F:sodium:proton antiporter activity"/>
    <property type="evidence" value="ECO:0007669"/>
    <property type="project" value="TreeGrafter"/>
</dbReference>
<dbReference type="InterPro" id="IPR007208">
    <property type="entry name" value="MrpF/PhaF-like"/>
</dbReference>
<dbReference type="NCBIfam" id="NF009248">
    <property type="entry name" value="PRK12600.1"/>
    <property type="match status" value="1"/>
</dbReference>
<dbReference type="PANTHER" id="PTHR34702">
    <property type="entry name" value="NA(+)/H(+) ANTIPORTER SUBUNIT F1"/>
    <property type="match status" value="1"/>
</dbReference>
<dbReference type="PANTHER" id="PTHR34702:SF1">
    <property type="entry name" value="NA(+)_H(+) ANTIPORTER SUBUNIT F"/>
    <property type="match status" value="1"/>
</dbReference>
<dbReference type="Pfam" id="PF04066">
    <property type="entry name" value="MrpF_PhaF"/>
    <property type="match status" value="1"/>
</dbReference>
<dbReference type="PIRSF" id="PIRSF028784">
    <property type="entry name" value="MrpF"/>
    <property type="match status" value="1"/>
</dbReference>
<proteinExistence type="evidence at protein level"/>
<keyword id="KW-0050">Antiport</keyword>
<keyword id="KW-1003">Cell membrane</keyword>
<keyword id="KW-0375">Hydrogen ion transport</keyword>
<keyword id="KW-0406">Ion transport</keyword>
<keyword id="KW-0472">Membrane</keyword>
<keyword id="KW-0915">Sodium</keyword>
<keyword id="KW-0739">Sodium transport</keyword>
<keyword id="KW-0812">Transmembrane</keyword>
<keyword id="KW-1133">Transmembrane helix</keyword>
<keyword id="KW-0813">Transport</keyword>